<gene>
    <name evidence="1" type="primary">rsmG</name>
    <name type="ordered locus">BbuZS7_0177</name>
</gene>
<reference key="1">
    <citation type="journal article" date="2011" name="J. Bacteriol.">
        <title>Whole-genome sequences of thirteen isolates of Borrelia burgdorferi.</title>
        <authorList>
            <person name="Schutzer S.E."/>
            <person name="Fraser-Liggett C.M."/>
            <person name="Casjens S.R."/>
            <person name="Qiu W.G."/>
            <person name="Dunn J.J."/>
            <person name="Mongodin E.F."/>
            <person name="Luft B.J."/>
        </authorList>
    </citation>
    <scope>NUCLEOTIDE SEQUENCE [LARGE SCALE GENOMIC DNA]</scope>
    <source>
        <strain>ZS7</strain>
    </source>
</reference>
<feature type="chain" id="PRO_1000117065" description="Ribosomal RNA small subunit methyltransferase G">
    <location>
        <begin position="1"/>
        <end position="208"/>
    </location>
</feature>
<feature type="binding site" evidence="1">
    <location>
        <position position="78"/>
    </location>
    <ligand>
        <name>S-adenosyl-L-methionine</name>
        <dbReference type="ChEBI" id="CHEBI:59789"/>
    </ligand>
</feature>
<feature type="binding site" evidence="1">
    <location>
        <position position="83"/>
    </location>
    <ligand>
        <name>S-adenosyl-L-methionine</name>
        <dbReference type="ChEBI" id="CHEBI:59789"/>
    </ligand>
</feature>
<feature type="binding site" evidence="1">
    <location>
        <begin position="101"/>
        <end position="103"/>
    </location>
    <ligand>
        <name>S-adenosyl-L-methionine</name>
        <dbReference type="ChEBI" id="CHEBI:59789"/>
    </ligand>
</feature>
<feature type="binding site" evidence="1">
    <location>
        <begin position="129"/>
        <end position="130"/>
    </location>
    <ligand>
        <name>S-adenosyl-L-methionine</name>
        <dbReference type="ChEBI" id="CHEBI:59789"/>
    </ligand>
</feature>
<feature type="binding site" evidence="1">
    <location>
        <position position="142"/>
    </location>
    <ligand>
        <name>S-adenosyl-L-methionine</name>
        <dbReference type="ChEBI" id="CHEBI:59789"/>
    </ligand>
</feature>
<sequence>MISDIEFALSEHNFQFAYKDLQKINLYIKRILLLNTRFNLISNSNSNFNSILNLHVIDSLLGLSTVKEINPSEVLDVGSGAGFPGIILAIFDTSRKYYLLERSKKKSTFLKMIKLELDLENVKILEYEIEKEKKKYEFITIRAFRSMNEYALILKNLLKGGGLIMAYKGKFDRINLEVNQIKNLFSKIEVKSLNSKLRVDRNLVLLYR</sequence>
<dbReference type="EC" id="2.1.1.-" evidence="1"/>
<dbReference type="EMBL" id="CP001205">
    <property type="protein sequence ID" value="ACK74960.1"/>
    <property type="molecule type" value="Genomic_DNA"/>
</dbReference>
<dbReference type="RefSeq" id="WP_002657589.1">
    <property type="nucleotide sequence ID" value="NC_011728.1"/>
</dbReference>
<dbReference type="SMR" id="B7J1B0"/>
<dbReference type="GeneID" id="56567604"/>
<dbReference type="KEGG" id="bbz:BbuZS7_0177"/>
<dbReference type="HOGENOM" id="CLU_065341_2_0_12"/>
<dbReference type="Proteomes" id="UP000006901">
    <property type="component" value="Chromosome"/>
</dbReference>
<dbReference type="GO" id="GO:0005829">
    <property type="term" value="C:cytosol"/>
    <property type="evidence" value="ECO:0007669"/>
    <property type="project" value="TreeGrafter"/>
</dbReference>
<dbReference type="GO" id="GO:0070043">
    <property type="term" value="F:rRNA (guanine-N7-)-methyltransferase activity"/>
    <property type="evidence" value="ECO:0007669"/>
    <property type="project" value="UniProtKB-UniRule"/>
</dbReference>
<dbReference type="Gene3D" id="3.40.50.150">
    <property type="entry name" value="Vaccinia Virus protein VP39"/>
    <property type="match status" value="1"/>
</dbReference>
<dbReference type="HAMAP" id="MF_00074">
    <property type="entry name" value="16SrRNA_methyltr_G"/>
    <property type="match status" value="1"/>
</dbReference>
<dbReference type="InterPro" id="IPR003682">
    <property type="entry name" value="rRNA_ssu_MeTfrase_G"/>
</dbReference>
<dbReference type="InterPro" id="IPR029063">
    <property type="entry name" value="SAM-dependent_MTases_sf"/>
</dbReference>
<dbReference type="NCBIfam" id="TIGR00138">
    <property type="entry name" value="rsmG_gidB"/>
    <property type="match status" value="1"/>
</dbReference>
<dbReference type="PANTHER" id="PTHR31760">
    <property type="entry name" value="S-ADENOSYL-L-METHIONINE-DEPENDENT METHYLTRANSFERASES SUPERFAMILY PROTEIN"/>
    <property type="match status" value="1"/>
</dbReference>
<dbReference type="PANTHER" id="PTHR31760:SF0">
    <property type="entry name" value="S-ADENOSYL-L-METHIONINE-DEPENDENT METHYLTRANSFERASES SUPERFAMILY PROTEIN"/>
    <property type="match status" value="1"/>
</dbReference>
<dbReference type="Pfam" id="PF02527">
    <property type="entry name" value="GidB"/>
    <property type="match status" value="1"/>
</dbReference>
<dbReference type="PIRSF" id="PIRSF003078">
    <property type="entry name" value="GidB"/>
    <property type="match status" value="1"/>
</dbReference>
<dbReference type="SUPFAM" id="SSF53335">
    <property type="entry name" value="S-adenosyl-L-methionine-dependent methyltransferases"/>
    <property type="match status" value="1"/>
</dbReference>
<organism>
    <name type="scientific">Borreliella burgdorferi (strain ZS7)</name>
    <name type="common">Borrelia burgdorferi</name>
    <dbReference type="NCBI Taxonomy" id="445985"/>
    <lineage>
        <taxon>Bacteria</taxon>
        <taxon>Pseudomonadati</taxon>
        <taxon>Spirochaetota</taxon>
        <taxon>Spirochaetia</taxon>
        <taxon>Spirochaetales</taxon>
        <taxon>Borreliaceae</taxon>
        <taxon>Borreliella</taxon>
    </lineage>
</organism>
<name>RSMG_BORBZ</name>
<accession>B7J1B0</accession>
<evidence type="ECO:0000255" key="1">
    <source>
        <dbReference type="HAMAP-Rule" id="MF_00074"/>
    </source>
</evidence>
<proteinExistence type="inferred from homology"/>
<protein>
    <recommendedName>
        <fullName evidence="1">Ribosomal RNA small subunit methyltransferase G</fullName>
        <ecNumber evidence="1">2.1.1.-</ecNumber>
    </recommendedName>
    <alternativeName>
        <fullName evidence="1">16S rRNA 7-methylguanosine methyltransferase</fullName>
        <shortName evidence="1">16S rRNA m7G methyltransferase</shortName>
    </alternativeName>
</protein>
<comment type="function">
    <text evidence="1">Specifically methylates the N7 position of a guanine in 16S rRNA.</text>
</comment>
<comment type="subcellular location">
    <subcellularLocation>
        <location evidence="1">Cytoplasm</location>
    </subcellularLocation>
</comment>
<comment type="similarity">
    <text evidence="1">Belongs to the methyltransferase superfamily. RNA methyltransferase RsmG family.</text>
</comment>
<keyword id="KW-0963">Cytoplasm</keyword>
<keyword id="KW-0489">Methyltransferase</keyword>
<keyword id="KW-0698">rRNA processing</keyword>
<keyword id="KW-0949">S-adenosyl-L-methionine</keyword>
<keyword id="KW-0808">Transferase</keyword>